<feature type="chain" id="PRO_1000066735" description="Bifunctional protein PyrR">
    <location>
        <begin position="1"/>
        <end position="180"/>
    </location>
</feature>
<feature type="short sequence motif" description="PRPP-binding" evidence="1">
    <location>
        <begin position="101"/>
        <end position="113"/>
    </location>
</feature>
<evidence type="ECO:0000255" key="1">
    <source>
        <dbReference type="HAMAP-Rule" id="MF_01219"/>
    </source>
</evidence>
<organism>
    <name type="scientific">Bacillus pumilus (strain SAFR-032)</name>
    <dbReference type="NCBI Taxonomy" id="315750"/>
    <lineage>
        <taxon>Bacteria</taxon>
        <taxon>Bacillati</taxon>
        <taxon>Bacillota</taxon>
        <taxon>Bacilli</taxon>
        <taxon>Bacillales</taxon>
        <taxon>Bacillaceae</taxon>
        <taxon>Bacillus</taxon>
    </lineage>
</organism>
<proteinExistence type="inferred from homology"/>
<reference key="1">
    <citation type="journal article" date="2007" name="PLoS ONE">
        <title>Paradoxical DNA repair and peroxide resistance gene conservation in Bacillus pumilus SAFR-032.</title>
        <authorList>
            <person name="Gioia J."/>
            <person name="Yerrapragada S."/>
            <person name="Qin X."/>
            <person name="Jiang H."/>
            <person name="Igboeli O.C."/>
            <person name="Muzny D."/>
            <person name="Dugan-Rocha S."/>
            <person name="Ding Y."/>
            <person name="Hawes A."/>
            <person name="Liu W."/>
            <person name="Perez L."/>
            <person name="Kovar C."/>
            <person name="Dinh H."/>
            <person name="Lee S."/>
            <person name="Nazareth L."/>
            <person name="Blyth P."/>
            <person name="Holder M."/>
            <person name="Buhay C."/>
            <person name="Tirumalai M.R."/>
            <person name="Liu Y."/>
            <person name="Dasgupta I."/>
            <person name="Bokhetache L."/>
            <person name="Fujita M."/>
            <person name="Karouia F."/>
            <person name="Eswara Moorthy P."/>
            <person name="Siefert J."/>
            <person name="Uzman A."/>
            <person name="Buzumbo P."/>
            <person name="Verma A."/>
            <person name="Zwiya H."/>
            <person name="McWilliams B.D."/>
            <person name="Olowu A."/>
            <person name="Clinkenbeard K.D."/>
            <person name="Newcombe D."/>
            <person name="Golebiewski L."/>
            <person name="Petrosino J.F."/>
            <person name="Nicholson W.L."/>
            <person name="Fox G.E."/>
            <person name="Venkateswaran K."/>
            <person name="Highlander S.K."/>
            <person name="Weinstock G.M."/>
        </authorList>
    </citation>
    <scope>NUCLEOTIDE SEQUENCE [LARGE SCALE GENOMIC DNA]</scope>
    <source>
        <strain>SAFR-032</strain>
    </source>
</reference>
<accession>A8FD12</accession>
<name>PYRR_BACP2</name>
<dbReference type="EC" id="2.4.2.9" evidence="1"/>
<dbReference type="EMBL" id="CP000813">
    <property type="protein sequence ID" value="ABV62129.1"/>
    <property type="molecule type" value="Genomic_DNA"/>
</dbReference>
<dbReference type="RefSeq" id="WP_012009892.1">
    <property type="nucleotide sequence ID" value="NZ_VEIS01000003.1"/>
</dbReference>
<dbReference type="SMR" id="A8FD12"/>
<dbReference type="STRING" id="315750.BPUM_1446"/>
<dbReference type="GeneID" id="5620710"/>
<dbReference type="KEGG" id="bpu:BPUM_1446"/>
<dbReference type="eggNOG" id="COG2065">
    <property type="taxonomic scope" value="Bacteria"/>
</dbReference>
<dbReference type="HOGENOM" id="CLU_094234_2_1_9"/>
<dbReference type="OrthoDB" id="9802227at2"/>
<dbReference type="Proteomes" id="UP000001355">
    <property type="component" value="Chromosome"/>
</dbReference>
<dbReference type="GO" id="GO:0003723">
    <property type="term" value="F:RNA binding"/>
    <property type="evidence" value="ECO:0007669"/>
    <property type="project" value="UniProtKB-UniRule"/>
</dbReference>
<dbReference type="GO" id="GO:0004845">
    <property type="term" value="F:uracil phosphoribosyltransferase activity"/>
    <property type="evidence" value="ECO:0007669"/>
    <property type="project" value="UniProtKB-UniRule"/>
</dbReference>
<dbReference type="GO" id="GO:0006353">
    <property type="term" value="P:DNA-templated transcription termination"/>
    <property type="evidence" value="ECO:0007669"/>
    <property type="project" value="UniProtKB-UniRule"/>
</dbReference>
<dbReference type="CDD" id="cd06223">
    <property type="entry name" value="PRTases_typeI"/>
    <property type="match status" value="1"/>
</dbReference>
<dbReference type="FunFam" id="3.40.50.2020:FF:000020">
    <property type="entry name" value="Bifunctional protein PyrR"/>
    <property type="match status" value="1"/>
</dbReference>
<dbReference type="Gene3D" id="3.40.50.2020">
    <property type="match status" value="1"/>
</dbReference>
<dbReference type="HAMAP" id="MF_01219">
    <property type="entry name" value="PyrR"/>
    <property type="match status" value="1"/>
</dbReference>
<dbReference type="InterPro" id="IPR000836">
    <property type="entry name" value="PRibTrfase_dom"/>
</dbReference>
<dbReference type="InterPro" id="IPR029057">
    <property type="entry name" value="PRTase-like"/>
</dbReference>
<dbReference type="InterPro" id="IPR023050">
    <property type="entry name" value="PyrR"/>
</dbReference>
<dbReference type="InterPro" id="IPR050137">
    <property type="entry name" value="PyrR_bifunctional"/>
</dbReference>
<dbReference type="NCBIfam" id="NF003547">
    <property type="entry name" value="PRK05205.1-3"/>
    <property type="match status" value="1"/>
</dbReference>
<dbReference type="NCBIfam" id="NF003548">
    <property type="entry name" value="PRK05205.1-4"/>
    <property type="match status" value="1"/>
</dbReference>
<dbReference type="NCBIfam" id="NF003549">
    <property type="entry name" value="PRK05205.1-5"/>
    <property type="match status" value="1"/>
</dbReference>
<dbReference type="PANTHER" id="PTHR11608">
    <property type="entry name" value="BIFUNCTIONAL PROTEIN PYRR"/>
    <property type="match status" value="1"/>
</dbReference>
<dbReference type="PANTHER" id="PTHR11608:SF0">
    <property type="entry name" value="BIFUNCTIONAL PROTEIN PYRR"/>
    <property type="match status" value="1"/>
</dbReference>
<dbReference type="Pfam" id="PF00156">
    <property type="entry name" value="Pribosyltran"/>
    <property type="match status" value="1"/>
</dbReference>
<dbReference type="SUPFAM" id="SSF53271">
    <property type="entry name" value="PRTase-like"/>
    <property type="match status" value="1"/>
</dbReference>
<gene>
    <name evidence="1" type="primary">pyrR</name>
    <name type="ordered locus">BPUM_1446</name>
</gene>
<protein>
    <recommendedName>
        <fullName evidence="1">Bifunctional protein PyrR</fullName>
    </recommendedName>
    <domain>
        <recommendedName>
            <fullName evidence="1">Pyrimidine operon regulatory protein</fullName>
        </recommendedName>
    </domain>
    <domain>
        <recommendedName>
            <fullName evidence="1">Uracil phosphoribosyltransferase</fullName>
            <shortName evidence="1">UPRTase</shortName>
            <ecNumber evidence="1">2.4.2.9</ecNumber>
        </recommendedName>
    </domain>
</protein>
<sequence length="180" mass="20085">MEQKAVILDEQAIRRALTRIAHEMIERNKGMKDVILAGIKTRGIHLAKRLAERIEQIEGNPVIVGELDITLYRDDLTKKTDNQDPLVKGADIPADINDKTLIVVDDVLFTGRTVRAAMDALVDVGRPSSIQLAVLVDRGHRELPIRADYIGKNIPTSKAETVMVQLNEVDQNDLVAIYEK</sequence>
<keyword id="KW-0328">Glycosyltransferase</keyword>
<keyword id="KW-0694">RNA-binding</keyword>
<keyword id="KW-0804">Transcription</keyword>
<keyword id="KW-0805">Transcription regulation</keyword>
<keyword id="KW-0806">Transcription termination</keyword>
<keyword id="KW-0808">Transferase</keyword>
<comment type="function">
    <text evidence="1">Regulates transcriptional attenuation of the pyrimidine nucleotide (pyr) operon by binding in a uridine-dependent manner to specific sites on pyr mRNA. This disrupts an antiterminator hairpin in the RNA and favors formation of a downstream transcription terminator, leading to a reduced expression of downstream genes.</text>
</comment>
<comment type="function">
    <text evidence="1">Also displays a weak uracil phosphoribosyltransferase activity which is not physiologically significant.</text>
</comment>
<comment type="catalytic activity">
    <reaction evidence="1">
        <text>UMP + diphosphate = 5-phospho-alpha-D-ribose 1-diphosphate + uracil</text>
        <dbReference type="Rhea" id="RHEA:13017"/>
        <dbReference type="ChEBI" id="CHEBI:17568"/>
        <dbReference type="ChEBI" id="CHEBI:33019"/>
        <dbReference type="ChEBI" id="CHEBI:57865"/>
        <dbReference type="ChEBI" id="CHEBI:58017"/>
        <dbReference type="EC" id="2.4.2.9"/>
    </reaction>
</comment>
<comment type="subunit">
    <text evidence="1">Homodimer and homohexamer; in equilibrium.</text>
</comment>
<comment type="similarity">
    <text evidence="1">Belongs to the purine/pyrimidine phosphoribosyltransferase family. PyrR subfamily.</text>
</comment>